<sequence length="178" mass="20375">MSAPTKRENDRARINEQITVPEVRLIDVDGNQAGIVSTREALRAAEESGLDLVEISPTAKPPVCRIMDYGKFLFELSKKQAEARKKQKQIQVKELKFRPTTEDGDYQVKLRNLIRFLNHGDKVKITLRFRGREMAHQELGMKILERLQADTADVAVVEQHAKREGRQLLMVLSPKKTK</sequence>
<accession>Q5X1H4</accession>
<keyword id="KW-0963">Cytoplasm</keyword>
<keyword id="KW-0396">Initiation factor</keyword>
<keyword id="KW-0648">Protein biosynthesis</keyword>
<comment type="function">
    <text evidence="1">IF-3 binds to the 30S ribosomal subunit and shifts the equilibrium between 70S ribosomes and their 50S and 30S subunits in favor of the free subunits, thus enhancing the availability of 30S subunits on which protein synthesis initiation begins.</text>
</comment>
<comment type="subunit">
    <text evidence="1">Monomer.</text>
</comment>
<comment type="subcellular location">
    <subcellularLocation>
        <location evidence="1">Cytoplasm</location>
    </subcellularLocation>
</comment>
<comment type="similarity">
    <text evidence="1">Belongs to the IF-3 family.</text>
</comment>
<evidence type="ECO:0000255" key="1">
    <source>
        <dbReference type="HAMAP-Rule" id="MF_00080"/>
    </source>
</evidence>
<gene>
    <name evidence="1" type="primary">infC</name>
    <name type="ordered locus">lpp2769</name>
</gene>
<reference key="1">
    <citation type="journal article" date="2004" name="Nat. Genet.">
        <title>Evidence in the Legionella pneumophila genome for exploitation of host cell functions and high genome plasticity.</title>
        <authorList>
            <person name="Cazalet C."/>
            <person name="Rusniok C."/>
            <person name="Brueggemann H."/>
            <person name="Zidane N."/>
            <person name="Magnier A."/>
            <person name="Ma L."/>
            <person name="Tichit M."/>
            <person name="Jarraud S."/>
            <person name="Bouchier C."/>
            <person name="Vandenesch F."/>
            <person name="Kunst F."/>
            <person name="Etienne J."/>
            <person name="Glaser P."/>
            <person name="Buchrieser C."/>
        </authorList>
    </citation>
    <scope>NUCLEOTIDE SEQUENCE [LARGE SCALE GENOMIC DNA]</scope>
    <source>
        <strain>Paris</strain>
    </source>
</reference>
<proteinExistence type="inferred from homology"/>
<protein>
    <recommendedName>
        <fullName evidence="1">Translation initiation factor IF-3</fullName>
    </recommendedName>
</protein>
<dbReference type="EMBL" id="CR628336">
    <property type="protein sequence ID" value="CAH13922.1"/>
    <property type="molecule type" value="Genomic_DNA"/>
</dbReference>
<dbReference type="RefSeq" id="WP_015961768.1">
    <property type="nucleotide sequence ID" value="NC_006368.1"/>
</dbReference>
<dbReference type="SMR" id="Q5X1H4"/>
<dbReference type="KEGG" id="lpp:lpp2769"/>
<dbReference type="LegioList" id="lpp2769"/>
<dbReference type="HOGENOM" id="CLU_054919_3_2_6"/>
<dbReference type="GO" id="GO:0005829">
    <property type="term" value="C:cytosol"/>
    <property type="evidence" value="ECO:0007669"/>
    <property type="project" value="TreeGrafter"/>
</dbReference>
<dbReference type="GO" id="GO:0016020">
    <property type="term" value="C:membrane"/>
    <property type="evidence" value="ECO:0007669"/>
    <property type="project" value="TreeGrafter"/>
</dbReference>
<dbReference type="GO" id="GO:0043022">
    <property type="term" value="F:ribosome binding"/>
    <property type="evidence" value="ECO:0007669"/>
    <property type="project" value="TreeGrafter"/>
</dbReference>
<dbReference type="GO" id="GO:0003743">
    <property type="term" value="F:translation initiation factor activity"/>
    <property type="evidence" value="ECO:0007669"/>
    <property type="project" value="UniProtKB-UniRule"/>
</dbReference>
<dbReference type="GO" id="GO:0032790">
    <property type="term" value="P:ribosome disassembly"/>
    <property type="evidence" value="ECO:0007669"/>
    <property type="project" value="TreeGrafter"/>
</dbReference>
<dbReference type="FunFam" id="3.10.20.80:FF:000001">
    <property type="entry name" value="Translation initiation factor IF-3"/>
    <property type="match status" value="1"/>
</dbReference>
<dbReference type="FunFam" id="3.30.110.10:FF:000001">
    <property type="entry name" value="Translation initiation factor IF-3"/>
    <property type="match status" value="1"/>
</dbReference>
<dbReference type="Gene3D" id="3.30.110.10">
    <property type="entry name" value="Translation initiation factor 3 (IF-3), C-terminal domain"/>
    <property type="match status" value="1"/>
</dbReference>
<dbReference type="Gene3D" id="3.10.20.80">
    <property type="entry name" value="Translation initiation factor 3 (IF-3), N-terminal domain"/>
    <property type="match status" value="1"/>
</dbReference>
<dbReference type="HAMAP" id="MF_00080">
    <property type="entry name" value="IF_3"/>
    <property type="match status" value="1"/>
</dbReference>
<dbReference type="InterPro" id="IPR036788">
    <property type="entry name" value="T_IF-3_C_sf"/>
</dbReference>
<dbReference type="InterPro" id="IPR036787">
    <property type="entry name" value="T_IF-3_N_sf"/>
</dbReference>
<dbReference type="InterPro" id="IPR019813">
    <property type="entry name" value="Translation_initiation_fac3_CS"/>
</dbReference>
<dbReference type="InterPro" id="IPR001288">
    <property type="entry name" value="Translation_initiation_fac_3"/>
</dbReference>
<dbReference type="InterPro" id="IPR019815">
    <property type="entry name" value="Translation_initiation_fac_3_C"/>
</dbReference>
<dbReference type="InterPro" id="IPR019814">
    <property type="entry name" value="Translation_initiation_fac_3_N"/>
</dbReference>
<dbReference type="NCBIfam" id="TIGR00168">
    <property type="entry name" value="infC"/>
    <property type="match status" value="1"/>
</dbReference>
<dbReference type="PANTHER" id="PTHR10938">
    <property type="entry name" value="TRANSLATION INITIATION FACTOR IF-3"/>
    <property type="match status" value="1"/>
</dbReference>
<dbReference type="PANTHER" id="PTHR10938:SF0">
    <property type="entry name" value="TRANSLATION INITIATION FACTOR IF-3, MITOCHONDRIAL"/>
    <property type="match status" value="1"/>
</dbReference>
<dbReference type="Pfam" id="PF00707">
    <property type="entry name" value="IF3_C"/>
    <property type="match status" value="1"/>
</dbReference>
<dbReference type="Pfam" id="PF05198">
    <property type="entry name" value="IF3_N"/>
    <property type="match status" value="1"/>
</dbReference>
<dbReference type="SUPFAM" id="SSF55200">
    <property type="entry name" value="Translation initiation factor IF3, C-terminal domain"/>
    <property type="match status" value="1"/>
</dbReference>
<dbReference type="SUPFAM" id="SSF54364">
    <property type="entry name" value="Translation initiation factor IF3, N-terminal domain"/>
    <property type="match status" value="1"/>
</dbReference>
<dbReference type="PROSITE" id="PS00938">
    <property type="entry name" value="IF3"/>
    <property type="match status" value="1"/>
</dbReference>
<name>IF3_LEGPA</name>
<feature type="chain" id="PRO_0000177532" description="Translation initiation factor IF-3">
    <location>
        <begin position="1"/>
        <end position="178"/>
    </location>
</feature>
<organism>
    <name type="scientific">Legionella pneumophila (strain Paris)</name>
    <dbReference type="NCBI Taxonomy" id="297246"/>
    <lineage>
        <taxon>Bacteria</taxon>
        <taxon>Pseudomonadati</taxon>
        <taxon>Pseudomonadota</taxon>
        <taxon>Gammaproteobacteria</taxon>
        <taxon>Legionellales</taxon>
        <taxon>Legionellaceae</taxon>
        <taxon>Legionella</taxon>
    </lineage>
</organism>